<reference key="1">
    <citation type="journal article" date="2000" name="Nature">
        <title>Genome sequence of the endocellular bacterial symbiont of aphids Buchnera sp. APS.</title>
        <authorList>
            <person name="Shigenobu S."/>
            <person name="Watanabe H."/>
            <person name="Hattori M."/>
            <person name="Sakaki Y."/>
            <person name="Ishikawa H."/>
        </authorList>
    </citation>
    <scope>NUCLEOTIDE SEQUENCE [LARGE SCALE GENOMIC DNA]</scope>
    <source>
        <strain>APS</strain>
    </source>
</reference>
<evidence type="ECO:0000255" key="1"/>
<evidence type="ECO:0000305" key="2"/>
<accession>P57524</accession>
<feature type="chain" id="PRO_0000156910" description="UPF0056 membrane protein BU449">
    <location>
        <begin position="1"/>
        <end position="196"/>
    </location>
</feature>
<feature type="transmembrane region" description="Helical" evidence="1">
    <location>
        <begin position="8"/>
        <end position="28"/>
    </location>
</feature>
<feature type="transmembrane region" description="Helical" evidence="1">
    <location>
        <begin position="45"/>
        <end position="65"/>
    </location>
</feature>
<feature type="transmembrane region" description="Helical" evidence="1">
    <location>
        <begin position="71"/>
        <end position="91"/>
    </location>
</feature>
<feature type="transmembrane region" description="Helical" evidence="1">
    <location>
        <begin position="105"/>
        <end position="125"/>
    </location>
</feature>
<feature type="transmembrane region" description="Helical" evidence="1">
    <location>
        <begin position="134"/>
        <end position="154"/>
    </location>
</feature>
<feature type="transmembrane region" description="Helical" evidence="1">
    <location>
        <begin position="174"/>
        <end position="194"/>
    </location>
</feature>
<organism>
    <name type="scientific">Buchnera aphidicola subsp. Acyrthosiphon pisum (strain APS)</name>
    <name type="common">Acyrthosiphon pisum symbiotic bacterium</name>
    <dbReference type="NCBI Taxonomy" id="107806"/>
    <lineage>
        <taxon>Bacteria</taxon>
        <taxon>Pseudomonadati</taxon>
        <taxon>Pseudomonadota</taxon>
        <taxon>Gammaproteobacteria</taxon>
        <taxon>Enterobacterales</taxon>
        <taxon>Erwiniaceae</taxon>
        <taxon>Buchnera</taxon>
    </lineage>
</organism>
<name>Y449_BUCAI</name>
<protein>
    <recommendedName>
        <fullName>UPF0056 membrane protein BU449</fullName>
    </recommendedName>
</protein>
<gene>
    <name type="ordered locus">BU449</name>
</gene>
<comment type="subcellular location">
    <subcellularLocation>
        <location evidence="2">Cell membrane</location>
        <topology evidence="2">Multi-pass membrane protein</topology>
    </subcellularLocation>
</comment>
<comment type="similarity">
    <text evidence="2">Belongs to the UPF0056 (MarC) family.</text>
</comment>
<comment type="sequence caution" evidence="2">
    <conflict type="erroneous initiation">
        <sequence resource="EMBL-CDS" id="BAB13147"/>
    </conflict>
</comment>
<sequence length="196" mass="22056">MTEIISTTILLVLIMDPLGNLPIFMTILKHLDVKRRRIVVIREMIIALIVMLLFLFVGEKILIILNLKTETVSISGGVILFLIAIKMIFPSEDNNNEISSSEEPFLVPLAIPLVAGPSLLATLMLLSHQYLHHMFYLVGSLLISWFFTVIILLSSSLFLKLFGSKGVNALERLMGLVLIMLSTQMFLDGIRAWFKN</sequence>
<dbReference type="EMBL" id="BA000003">
    <property type="protein sequence ID" value="BAB13147.1"/>
    <property type="status" value="ALT_INIT"/>
    <property type="molecule type" value="Genomic_DNA"/>
</dbReference>
<dbReference type="RefSeq" id="NP_240261.2">
    <property type="nucleotide sequence ID" value="NC_002528.1"/>
</dbReference>
<dbReference type="RefSeq" id="WP_010896122.1">
    <property type="nucleotide sequence ID" value="NZ_AP036055.1"/>
</dbReference>
<dbReference type="STRING" id="563178.BUAP5A_442"/>
<dbReference type="EnsemblBacteria" id="BAB13147">
    <property type="protein sequence ID" value="BAB13147"/>
    <property type="gene ID" value="BAB13147"/>
</dbReference>
<dbReference type="KEGG" id="buc:BU449"/>
<dbReference type="PATRIC" id="fig|107806.10.peg.459"/>
<dbReference type="eggNOG" id="COG2095">
    <property type="taxonomic scope" value="Bacteria"/>
</dbReference>
<dbReference type="HOGENOM" id="CLU_079909_1_1_6"/>
<dbReference type="BioCyc" id="BAPH107806:GBZJ-442-MONOMER"/>
<dbReference type="Proteomes" id="UP000001806">
    <property type="component" value="Chromosome"/>
</dbReference>
<dbReference type="GO" id="GO:0005886">
    <property type="term" value="C:plasma membrane"/>
    <property type="evidence" value="ECO:0007669"/>
    <property type="project" value="UniProtKB-SubCell"/>
</dbReference>
<dbReference type="InterPro" id="IPR002771">
    <property type="entry name" value="Multi_antbiot-R_MarC"/>
</dbReference>
<dbReference type="NCBIfam" id="NF008010">
    <property type="entry name" value="PRK10739.1"/>
    <property type="match status" value="1"/>
</dbReference>
<dbReference type="PANTHER" id="PTHR33508:SF10">
    <property type="entry name" value="UPF0056 INNER MEMBRANE PROTEIN YHGN"/>
    <property type="match status" value="1"/>
</dbReference>
<dbReference type="PANTHER" id="PTHR33508">
    <property type="entry name" value="UPF0056 MEMBRANE PROTEIN YHCE"/>
    <property type="match status" value="1"/>
</dbReference>
<dbReference type="Pfam" id="PF01914">
    <property type="entry name" value="MarC"/>
    <property type="match status" value="1"/>
</dbReference>
<keyword id="KW-1003">Cell membrane</keyword>
<keyword id="KW-0472">Membrane</keyword>
<keyword id="KW-1185">Reference proteome</keyword>
<keyword id="KW-0812">Transmembrane</keyword>
<keyword id="KW-1133">Transmembrane helix</keyword>
<proteinExistence type="inferred from homology"/>